<dbReference type="EC" id="3.6.1.27" evidence="1"/>
<dbReference type="EMBL" id="CP000730">
    <property type="protein sequence ID" value="ABX28727.1"/>
    <property type="molecule type" value="Genomic_DNA"/>
</dbReference>
<dbReference type="RefSeq" id="WP_000469890.1">
    <property type="nucleotide sequence ID" value="NC_010079.1"/>
</dbReference>
<dbReference type="SMR" id="A8YZV4"/>
<dbReference type="KEGG" id="sax:USA300HOU_0706"/>
<dbReference type="HOGENOM" id="CLU_060296_2_0_9"/>
<dbReference type="GO" id="GO:0005886">
    <property type="term" value="C:plasma membrane"/>
    <property type="evidence" value="ECO:0007669"/>
    <property type="project" value="UniProtKB-SubCell"/>
</dbReference>
<dbReference type="GO" id="GO:0050380">
    <property type="term" value="F:undecaprenyl-diphosphatase activity"/>
    <property type="evidence" value="ECO:0007669"/>
    <property type="project" value="UniProtKB-UniRule"/>
</dbReference>
<dbReference type="GO" id="GO:0071555">
    <property type="term" value="P:cell wall organization"/>
    <property type="evidence" value="ECO:0007669"/>
    <property type="project" value="UniProtKB-KW"/>
</dbReference>
<dbReference type="GO" id="GO:0009252">
    <property type="term" value="P:peptidoglycan biosynthetic process"/>
    <property type="evidence" value="ECO:0007669"/>
    <property type="project" value="UniProtKB-KW"/>
</dbReference>
<dbReference type="GO" id="GO:0008360">
    <property type="term" value="P:regulation of cell shape"/>
    <property type="evidence" value="ECO:0007669"/>
    <property type="project" value="UniProtKB-KW"/>
</dbReference>
<dbReference type="GO" id="GO:0046677">
    <property type="term" value="P:response to antibiotic"/>
    <property type="evidence" value="ECO:0007669"/>
    <property type="project" value="UniProtKB-UniRule"/>
</dbReference>
<dbReference type="HAMAP" id="MF_01006">
    <property type="entry name" value="Undec_diphosphatase"/>
    <property type="match status" value="1"/>
</dbReference>
<dbReference type="InterPro" id="IPR003824">
    <property type="entry name" value="UppP"/>
</dbReference>
<dbReference type="NCBIfam" id="NF001390">
    <property type="entry name" value="PRK00281.1-4"/>
    <property type="match status" value="1"/>
</dbReference>
<dbReference type="NCBIfam" id="TIGR00753">
    <property type="entry name" value="undec_PP_bacA"/>
    <property type="match status" value="1"/>
</dbReference>
<dbReference type="PANTHER" id="PTHR30622">
    <property type="entry name" value="UNDECAPRENYL-DIPHOSPHATASE"/>
    <property type="match status" value="1"/>
</dbReference>
<dbReference type="PANTHER" id="PTHR30622:SF3">
    <property type="entry name" value="UNDECAPRENYL-DIPHOSPHATASE"/>
    <property type="match status" value="1"/>
</dbReference>
<dbReference type="Pfam" id="PF02673">
    <property type="entry name" value="BacA"/>
    <property type="match status" value="1"/>
</dbReference>
<name>UPPP_STAAT</name>
<proteinExistence type="inferred from homology"/>
<protein>
    <recommendedName>
        <fullName evidence="1">Undecaprenyl-diphosphatase</fullName>
        <ecNumber evidence="1">3.6.1.27</ecNumber>
    </recommendedName>
    <alternativeName>
        <fullName evidence="1">Bacitracin resistance protein</fullName>
    </alternativeName>
    <alternativeName>
        <fullName evidence="1">Undecaprenyl pyrophosphate phosphatase</fullName>
    </alternativeName>
</protein>
<keyword id="KW-0046">Antibiotic resistance</keyword>
<keyword id="KW-1003">Cell membrane</keyword>
<keyword id="KW-0133">Cell shape</keyword>
<keyword id="KW-0961">Cell wall biogenesis/degradation</keyword>
<keyword id="KW-0378">Hydrolase</keyword>
<keyword id="KW-0472">Membrane</keyword>
<keyword id="KW-0573">Peptidoglycan synthesis</keyword>
<keyword id="KW-0812">Transmembrane</keyword>
<keyword id="KW-1133">Transmembrane helix</keyword>
<comment type="function">
    <text evidence="1">Catalyzes the dephosphorylation of undecaprenyl diphosphate (UPP). Confers resistance to bacitracin.</text>
</comment>
<comment type="catalytic activity">
    <reaction evidence="1">
        <text>di-trans,octa-cis-undecaprenyl diphosphate + H2O = di-trans,octa-cis-undecaprenyl phosphate + phosphate + H(+)</text>
        <dbReference type="Rhea" id="RHEA:28094"/>
        <dbReference type="ChEBI" id="CHEBI:15377"/>
        <dbReference type="ChEBI" id="CHEBI:15378"/>
        <dbReference type="ChEBI" id="CHEBI:43474"/>
        <dbReference type="ChEBI" id="CHEBI:58405"/>
        <dbReference type="ChEBI" id="CHEBI:60392"/>
        <dbReference type="EC" id="3.6.1.27"/>
    </reaction>
</comment>
<comment type="subcellular location">
    <subcellularLocation>
        <location evidence="1">Cell membrane</location>
        <topology evidence="1">Multi-pass membrane protein</topology>
    </subcellularLocation>
</comment>
<comment type="miscellaneous">
    <text>Bacitracin is thought to be involved in the inhibition of peptidoglycan synthesis by sequestering undecaprenyl diphosphate, thereby reducing the pool of lipid carrier available.</text>
</comment>
<comment type="similarity">
    <text evidence="1">Belongs to the UppP family.</text>
</comment>
<evidence type="ECO:0000255" key="1">
    <source>
        <dbReference type="HAMAP-Rule" id="MF_01006"/>
    </source>
</evidence>
<feature type="chain" id="PRO_1000083994" description="Undecaprenyl-diphosphatase">
    <location>
        <begin position="1"/>
        <end position="291"/>
    </location>
</feature>
<feature type="transmembrane region" description="Helical" evidence="1">
    <location>
        <begin position="1"/>
        <end position="21"/>
    </location>
</feature>
<feature type="transmembrane region" description="Helical" evidence="1">
    <location>
        <begin position="48"/>
        <end position="68"/>
    </location>
</feature>
<feature type="transmembrane region" description="Helical" evidence="1">
    <location>
        <begin position="102"/>
        <end position="122"/>
    </location>
</feature>
<feature type="transmembrane region" description="Helical" evidence="1">
    <location>
        <begin position="126"/>
        <end position="146"/>
    </location>
</feature>
<feature type="transmembrane region" description="Helical" evidence="1">
    <location>
        <begin position="162"/>
        <end position="182"/>
    </location>
</feature>
<feature type="transmembrane region" description="Helical" evidence="1">
    <location>
        <begin position="203"/>
        <end position="223"/>
    </location>
</feature>
<feature type="transmembrane region" description="Helical" evidence="1">
    <location>
        <begin position="231"/>
        <end position="251"/>
    </location>
</feature>
<feature type="transmembrane region" description="Helical" evidence="1">
    <location>
        <begin position="267"/>
        <end position="287"/>
    </location>
</feature>
<reference key="1">
    <citation type="journal article" date="2007" name="BMC Microbiol.">
        <title>Subtle genetic changes enhance virulence of methicillin resistant and sensitive Staphylococcus aureus.</title>
        <authorList>
            <person name="Highlander S.K."/>
            <person name="Hulten K.G."/>
            <person name="Qin X."/>
            <person name="Jiang H."/>
            <person name="Yerrapragada S."/>
            <person name="Mason E.O. Jr."/>
            <person name="Shang Y."/>
            <person name="Williams T.M."/>
            <person name="Fortunov R.M."/>
            <person name="Liu Y."/>
            <person name="Igboeli O."/>
            <person name="Petrosino J."/>
            <person name="Tirumalai M."/>
            <person name="Uzman A."/>
            <person name="Fox G.E."/>
            <person name="Cardenas A.M."/>
            <person name="Muzny D.M."/>
            <person name="Hemphill L."/>
            <person name="Ding Y."/>
            <person name="Dugan S."/>
            <person name="Blyth P.R."/>
            <person name="Buhay C.J."/>
            <person name="Dinh H.H."/>
            <person name="Hawes A.C."/>
            <person name="Holder M."/>
            <person name="Kovar C.L."/>
            <person name="Lee S.L."/>
            <person name="Liu W."/>
            <person name="Nazareth L.V."/>
            <person name="Wang Q."/>
            <person name="Zhou J."/>
            <person name="Kaplan S.L."/>
            <person name="Weinstock G.M."/>
        </authorList>
    </citation>
    <scope>NUCLEOTIDE SEQUENCE [LARGE SCALE GENOMIC DNA]</scope>
    <source>
        <strain>USA300 / TCH1516</strain>
    </source>
</reference>
<organism>
    <name type="scientific">Staphylococcus aureus (strain USA300 / TCH1516)</name>
    <dbReference type="NCBI Taxonomy" id="451516"/>
    <lineage>
        <taxon>Bacteria</taxon>
        <taxon>Bacillati</taxon>
        <taxon>Bacillota</taxon>
        <taxon>Bacilli</taxon>
        <taxon>Bacillales</taxon>
        <taxon>Staphylococcaceae</taxon>
        <taxon>Staphylococcus</taxon>
    </lineage>
</organism>
<accession>A8YZV4</accession>
<gene>
    <name evidence="1" type="primary">uppP</name>
    <name type="ordered locus">USA300HOU_0706</name>
</gene>
<sequence length="291" mass="32269">MFIIELIKGIILGVVEGLTEFAPVSSTGHMILVDDMWLKSSEFLGSQSAFTFKIVIQLGSVFAAAWVFRERFLEILHIGKHKHVEGDNDQQRRSKPRRLNLLHVLVGMVPAGILGLLFDDFIEEHLFSVPTVMIGLFVGAIYMIIADKYSAKVKNPQTVDQISYFQAFVIGISQAVAMWPGFSRSGSTISTGVLMKLNHKAASDFTFIMAVPIMLAASGLSLLKHYQDIQIADIPFYILGFLAAFTVGLIAIKTFLHLINKIKLIPFAIYRIVLVIFIAILYFGFGIGKGI</sequence>